<sequence length="326" mass="36586">MEVADRMMSNGVDNDRRSSPSPHRGNGDMNNGNGNGNRDSRERSPPRGNSRERSPPRGGSPNRGGSPNRGGSPNRGGSPNRGGSPSRDDKRRYGNGGNGETRNRLANTASPSNVLGVFGLAPQTEERDLKDEFSRFGKIDHVDLIMDRKTGRSKCFGFVYFENKEDAVRAKEECQDLQLHGKSIRTDFSATKKPHEPTPGKYFGNPRYDSRRSPPRFSPYGGGDRYGRGDYGGRGGGGDRYGRDDRGGDRYGRDDRGGDRYGGRDDRGGDRYGGRDERGGDRGGDRYGRDDRDRHREDSRDRYNDRGGDRYNDRFRDERPRDSYRR</sequence>
<evidence type="ECO:0000250" key="1"/>
<evidence type="ECO:0000255" key="2">
    <source>
        <dbReference type="PROSITE-ProRule" id="PRU00176"/>
    </source>
</evidence>
<evidence type="ECO:0000256" key="3">
    <source>
        <dbReference type="SAM" id="MobiDB-lite"/>
    </source>
</evidence>
<evidence type="ECO:0000305" key="4"/>
<name>TRA2_DICDI</name>
<keyword id="KW-0507">mRNA processing</keyword>
<keyword id="KW-0508">mRNA splicing</keyword>
<keyword id="KW-0539">Nucleus</keyword>
<keyword id="KW-1185">Reference proteome</keyword>
<keyword id="KW-0694">RNA-binding</keyword>
<comment type="function">
    <text evidence="1">Sequence-specific RNA-binding protein which participates in the control of pre-mRNA splicing.</text>
</comment>
<comment type="subcellular location">
    <subcellularLocation>
        <location evidence="1">Nucleus</location>
    </subcellularLocation>
</comment>
<comment type="similarity">
    <text evidence="4">Belongs to the splicing factor SR family.</text>
</comment>
<accession>Q54Y98</accession>
<proteinExistence type="inferred from homology"/>
<dbReference type="EMBL" id="AAFI02000023">
    <property type="protein sequence ID" value="EAL68347.1"/>
    <property type="molecule type" value="Genomic_DNA"/>
</dbReference>
<dbReference type="RefSeq" id="XP_642304.1">
    <property type="nucleotide sequence ID" value="XM_637212.1"/>
</dbReference>
<dbReference type="SMR" id="Q54Y98"/>
<dbReference type="FunCoup" id="Q54Y98">
    <property type="interactions" value="25"/>
</dbReference>
<dbReference type="STRING" id="44689.Q54Y98"/>
<dbReference type="GlyGen" id="Q54Y98">
    <property type="glycosylation" value="1 site"/>
</dbReference>
<dbReference type="PaxDb" id="44689-DDB0233352"/>
<dbReference type="EnsemblProtists" id="EAL68347">
    <property type="protein sequence ID" value="EAL68347"/>
    <property type="gene ID" value="DDB_G0278349"/>
</dbReference>
<dbReference type="GeneID" id="8621510"/>
<dbReference type="KEGG" id="ddi:DDB_G0278349"/>
<dbReference type="dictyBase" id="DDB_G0278349">
    <property type="gene designation" value="tra2"/>
</dbReference>
<dbReference type="VEuPathDB" id="AmoebaDB:DDB_G0278349"/>
<dbReference type="eggNOG" id="KOG0118">
    <property type="taxonomic scope" value="Eukaryota"/>
</dbReference>
<dbReference type="HOGENOM" id="CLU_937644_0_0_1"/>
<dbReference type="InParanoid" id="Q54Y98"/>
<dbReference type="OMA" id="RAKEECQ"/>
<dbReference type="PRO" id="PR:Q54Y98"/>
<dbReference type="Proteomes" id="UP000002195">
    <property type="component" value="Chromosome 3"/>
</dbReference>
<dbReference type="GO" id="GO:0005737">
    <property type="term" value="C:cytoplasm"/>
    <property type="evidence" value="ECO:0000318"/>
    <property type="project" value="GO_Central"/>
</dbReference>
<dbReference type="GO" id="GO:0005634">
    <property type="term" value="C:nucleus"/>
    <property type="evidence" value="ECO:0000250"/>
    <property type="project" value="dictyBase"/>
</dbReference>
<dbReference type="GO" id="GO:0045335">
    <property type="term" value="C:phagocytic vesicle"/>
    <property type="evidence" value="ECO:0007005"/>
    <property type="project" value="dictyBase"/>
</dbReference>
<dbReference type="GO" id="GO:0003729">
    <property type="term" value="F:mRNA binding"/>
    <property type="evidence" value="ECO:0000318"/>
    <property type="project" value="GO_Central"/>
</dbReference>
<dbReference type="GO" id="GO:0000398">
    <property type="term" value="P:mRNA splicing, via spliceosome"/>
    <property type="evidence" value="ECO:0000250"/>
    <property type="project" value="dictyBase"/>
</dbReference>
<dbReference type="CDD" id="cd12363">
    <property type="entry name" value="RRM_TRA2"/>
    <property type="match status" value="1"/>
</dbReference>
<dbReference type="FunFam" id="3.30.70.330:FF:001823">
    <property type="match status" value="1"/>
</dbReference>
<dbReference type="Gene3D" id="3.30.70.330">
    <property type="match status" value="1"/>
</dbReference>
<dbReference type="InterPro" id="IPR012677">
    <property type="entry name" value="Nucleotide-bd_a/b_plait_sf"/>
</dbReference>
<dbReference type="InterPro" id="IPR035979">
    <property type="entry name" value="RBD_domain_sf"/>
</dbReference>
<dbReference type="InterPro" id="IPR000504">
    <property type="entry name" value="RRM_dom"/>
</dbReference>
<dbReference type="InterPro" id="IPR052462">
    <property type="entry name" value="SLIRP/GR-RBP-like"/>
</dbReference>
<dbReference type="PANTHER" id="PTHR48027">
    <property type="entry name" value="HETEROGENEOUS NUCLEAR RIBONUCLEOPROTEIN 87F-RELATED"/>
    <property type="match status" value="1"/>
</dbReference>
<dbReference type="Pfam" id="PF00076">
    <property type="entry name" value="RRM_1"/>
    <property type="match status" value="1"/>
</dbReference>
<dbReference type="SMART" id="SM00360">
    <property type="entry name" value="RRM"/>
    <property type="match status" value="1"/>
</dbReference>
<dbReference type="SUPFAM" id="SSF54928">
    <property type="entry name" value="RNA-binding domain, RBD"/>
    <property type="match status" value="1"/>
</dbReference>
<dbReference type="PROSITE" id="PS50102">
    <property type="entry name" value="RRM"/>
    <property type="match status" value="1"/>
</dbReference>
<organism>
    <name type="scientific">Dictyostelium discoideum</name>
    <name type="common">Social amoeba</name>
    <dbReference type="NCBI Taxonomy" id="44689"/>
    <lineage>
        <taxon>Eukaryota</taxon>
        <taxon>Amoebozoa</taxon>
        <taxon>Evosea</taxon>
        <taxon>Eumycetozoa</taxon>
        <taxon>Dictyostelia</taxon>
        <taxon>Dictyosteliales</taxon>
        <taxon>Dictyosteliaceae</taxon>
        <taxon>Dictyostelium</taxon>
    </lineage>
</organism>
<feature type="chain" id="PRO_0000327729" description="Transformer-2 protein homolog">
    <location>
        <begin position="1"/>
        <end position="326"/>
    </location>
</feature>
<feature type="domain" description="RRM" evidence="2">
    <location>
        <begin position="113"/>
        <end position="191"/>
    </location>
</feature>
<feature type="region of interest" description="Disordered" evidence="3">
    <location>
        <begin position="1"/>
        <end position="114"/>
    </location>
</feature>
<feature type="region of interest" description="Disordered" evidence="3">
    <location>
        <begin position="179"/>
        <end position="326"/>
    </location>
</feature>
<feature type="compositionally biased region" description="Basic and acidic residues" evidence="3">
    <location>
        <begin position="38"/>
        <end position="55"/>
    </location>
</feature>
<feature type="compositionally biased region" description="Low complexity" evidence="3">
    <location>
        <begin position="56"/>
        <end position="85"/>
    </location>
</feature>
<feature type="compositionally biased region" description="Polar residues" evidence="3">
    <location>
        <begin position="104"/>
        <end position="113"/>
    </location>
</feature>
<feature type="compositionally biased region" description="Gly residues" evidence="3">
    <location>
        <begin position="220"/>
        <end position="239"/>
    </location>
</feature>
<feature type="compositionally biased region" description="Basic and acidic residues" evidence="3">
    <location>
        <begin position="240"/>
        <end position="326"/>
    </location>
</feature>
<gene>
    <name type="primary">tra2</name>
    <name type="ORF">DDB_G0278349</name>
</gene>
<reference key="1">
    <citation type="journal article" date="2005" name="Nature">
        <title>The genome of the social amoeba Dictyostelium discoideum.</title>
        <authorList>
            <person name="Eichinger L."/>
            <person name="Pachebat J.A."/>
            <person name="Gloeckner G."/>
            <person name="Rajandream M.A."/>
            <person name="Sucgang R."/>
            <person name="Berriman M."/>
            <person name="Song J."/>
            <person name="Olsen R."/>
            <person name="Szafranski K."/>
            <person name="Xu Q."/>
            <person name="Tunggal B."/>
            <person name="Kummerfeld S."/>
            <person name="Madera M."/>
            <person name="Konfortov B.A."/>
            <person name="Rivero F."/>
            <person name="Bankier A.T."/>
            <person name="Lehmann R."/>
            <person name="Hamlin N."/>
            <person name="Davies R."/>
            <person name="Gaudet P."/>
            <person name="Fey P."/>
            <person name="Pilcher K."/>
            <person name="Chen G."/>
            <person name="Saunders D."/>
            <person name="Sodergren E.J."/>
            <person name="Davis P."/>
            <person name="Kerhornou A."/>
            <person name="Nie X."/>
            <person name="Hall N."/>
            <person name="Anjard C."/>
            <person name="Hemphill L."/>
            <person name="Bason N."/>
            <person name="Farbrother P."/>
            <person name="Desany B."/>
            <person name="Just E."/>
            <person name="Morio T."/>
            <person name="Rost R."/>
            <person name="Churcher C.M."/>
            <person name="Cooper J."/>
            <person name="Haydock S."/>
            <person name="van Driessche N."/>
            <person name="Cronin A."/>
            <person name="Goodhead I."/>
            <person name="Muzny D.M."/>
            <person name="Mourier T."/>
            <person name="Pain A."/>
            <person name="Lu M."/>
            <person name="Harper D."/>
            <person name="Lindsay R."/>
            <person name="Hauser H."/>
            <person name="James K.D."/>
            <person name="Quiles M."/>
            <person name="Madan Babu M."/>
            <person name="Saito T."/>
            <person name="Buchrieser C."/>
            <person name="Wardroper A."/>
            <person name="Felder M."/>
            <person name="Thangavelu M."/>
            <person name="Johnson D."/>
            <person name="Knights A."/>
            <person name="Loulseged H."/>
            <person name="Mungall K.L."/>
            <person name="Oliver K."/>
            <person name="Price C."/>
            <person name="Quail M.A."/>
            <person name="Urushihara H."/>
            <person name="Hernandez J."/>
            <person name="Rabbinowitsch E."/>
            <person name="Steffen D."/>
            <person name="Sanders M."/>
            <person name="Ma J."/>
            <person name="Kohara Y."/>
            <person name="Sharp S."/>
            <person name="Simmonds M.N."/>
            <person name="Spiegler S."/>
            <person name="Tivey A."/>
            <person name="Sugano S."/>
            <person name="White B."/>
            <person name="Walker D."/>
            <person name="Woodward J.R."/>
            <person name="Winckler T."/>
            <person name="Tanaka Y."/>
            <person name="Shaulsky G."/>
            <person name="Schleicher M."/>
            <person name="Weinstock G.M."/>
            <person name="Rosenthal A."/>
            <person name="Cox E.C."/>
            <person name="Chisholm R.L."/>
            <person name="Gibbs R.A."/>
            <person name="Loomis W.F."/>
            <person name="Platzer M."/>
            <person name="Kay R.R."/>
            <person name="Williams J.G."/>
            <person name="Dear P.H."/>
            <person name="Noegel A.A."/>
            <person name="Barrell B.G."/>
            <person name="Kuspa A."/>
        </authorList>
    </citation>
    <scope>NUCLEOTIDE SEQUENCE [LARGE SCALE GENOMIC DNA]</scope>
    <source>
        <strain>AX4</strain>
    </source>
</reference>
<protein>
    <recommendedName>
        <fullName>Transformer-2 protein homolog</fullName>
    </recommendedName>
</protein>